<organism>
    <name type="scientific">Francisella tularensis subsp. mediasiatica (strain FSC147)</name>
    <dbReference type="NCBI Taxonomy" id="441952"/>
    <lineage>
        <taxon>Bacteria</taxon>
        <taxon>Pseudomonadati</taxon>
        <taxon>Pseudomonadota</taxon>
        <taxon>Gammaproteobacteria</taxon>
        <taxon>Thiotrichales</taxon>
        <taxon>Francisellaceae</taxon>
        <taxon>Francisella</taxon>
    </lineage>
</organism>
<proteinExistence type="inferred from homology"/>
<gene>
    <name evidence="1" type="primary">gcvPB</name>
    <name type="ordered locus">FTM_0566</name>
</gene>
<sequence length="481" mass="52762">MVIFEKTRGKNSPSVMPSKKGDVSNIPTDMLRTKKPILPEQAELDVVRHYTQLSRKNFCIDTNFYPLGSCTMKYNPRAAHKYASLAGFLERHPYASAQSVQGTLECLYDLQNLIKELTGMTGVSLAPMAGAQGEFAGVAMIKAYHHKRSDFERDEIIVPDAAHGTNPATAKVCGLKVIEIPTKKDGDIDIEALDKVLGPKTAGIMLTNPSTVGVFERNIAVIAKKVHEAGGLLYYDGANLNAIMGKARPGDMGFDVLHMNLHKTFATPHGGGGPGAGPVAVNDKLKEFLPVPMVGKKDDKFVWLEEKDVSNTIGRLSAFNGNIGVLIRAYIYGAMLGGNGLTEASEIATLNANYMMARLKEEGFTIAYPDRRASHEFIVTLKPEFLNYGVTATDFAKCLIDKGVHAPTMYFPLLVPECLLIEPTETENVDSMEKFIQAMVEIRDIAKKDPQYLKGAPYNLPARRLDDVKAAKELDIVWQPK</sequence>
<feature type="chain" id="PRO_1000132501" description="Probable glycine dehydrogenase (decarboxylating) subunit 2">
    <location>
        <begin position="1"/>
        <end position="481"/>
    </location>
</feature>
<feature type="region of interest" description="Disordered" evidence="2">
    <location>
        <begin position="1"/>
        <end position="26"/>
    </location>
</feature>
<feature type="modified residue" description="N6-(pyridoxal phosphate)lysine" evidence="1">
    <location>
        <position position="263"/>
    </location>
</feature>
<dbReference type="EC" id="1.4.4.2" evidence="1"/>
<dbReference type="EMBL" id="CP000915">
    <property type="protein sequence ID" value="ACD30567.1"/>
    <property type="molecule type" value="Genomic_DNA"/>
</dbReference>
<dbReference type="SMR" id="B2SFM4"/>
<dbReference type="KEGG" id="ftm:FTM_0566"/>
<dbReference type="HOGENOM" id="CLU_004620_5_0_6"/>
<dbReference type="GO" id="GO:0005829">
    <property type="term" value="C:cytosol"/>
    <property type="evidence" value="ECO:0007669"/>
    <property type="project" value="TreeGrafter"/>
</dbReference>
<dbReference type="GO" id="GO:0005960">
    <property type="term" value="C:glycine cleavage complex"/>
    <property type="evidence" value="ECO:0007669"/>
    <property type="project" value="TreeGrafter"/>
</dbReference>
<dbReference type="GO" id="GO:0016594">
    <property type="term" value="F:glycine binding"/>
    <property type="evidence" value="ECO:0007669"/>
    <property type="project" value="TreeGrafter"/>
</dbReference>
<dbReference type="GO" id="GO:0004375">
    <property type="term" value="F:glycine dehydrogenase (decarboxylating) activity"/>
    <property type="evidence" value="ECO:0007669"/>
    <property type="project" value="UniProtKB-EC"/>
</dbReference>
<dbReference type="GO" id="GO:0030170">
    <property type="term" value="F:pyridoxal phosphate binding"/>
    <property type="evidence" value="ECO:0007669"/>
    <property type="project" value="TreeGrafter"/>
</dbReference>
<dbReference type="GO" id="GO:0019464">
    <property type="term" value="P:glycine decarboxylation via glycine cleavage system"/>
    <property type="evidence" value="ECO:0007669"/>
    <property type="project" value="UniProtKB-UniRule"/>
</dbReference>
<dbReference type="FunFam" id="3.40.640.10:FF:000224">
    <property type="entry name" value="Probable glycine dehydrogenase (decarboxylating) subunit 2"/>
    <property type="match status" value="1"/>
</dbReference>
<dbReference type="Gene3D" id="6.20.440.10">
    <property type="match status" value="1"/>
</dbReference>
<dbReference type="Gene3D" id="3.90.1150.10">
    <property type="entry name" value="Aspartate Aminotransferase, domain 1"/>
    <property type="match status" value="1"/>
</dbReference>
<dbReference type="Gene3D" id="3.40.640.10">
    <property type="entry name" value="Type I PLP-dependent aspartate aminotransferase-like (Major domain)"/>
    <property type="match status" value="1"/>
</dbReference>
<dbReference type="HAMAP" id="MF_00713">
    <property type="entry name" value="GcvPB"/>
    <property type="match status" value="1"/>
</dbReference>
<dbReference type="InterPro" id="IPR023012">
    <property type="entry name" value="GcvPB"/>
</dbReference>
<dbReference type="InterPro" id="IPR049316">
    <property type="entry name" value="GDC-P_C"/>
</dbReference>
<dbReference type="InterPro" id="IPR049315">
    <property type="entry name" value="GDC-P_N"/>
</dbReference>
<dbReference type="InterPro" id="IPR020581">
    <property type="entry name" value="GDC_P"/>
</dbReference>
<dbReference type="InterPro" id="IPR015424">
    <property type="entry name" value="PyrdxlP-dep_Trfase"/>
</dbReference>
<dbReference type="InterPro" id="IPR015421">
    <property type="entry name" value="PyrdxlP-dep_Trfase_major"/>
</dbReference>
<dbReference type="InterPro" id="IPR015422">
    <property type="entry name" value="PyrdxlP-dep_Trfase_small"/>
</dbReference>
<dbReference type="NCBIfam" id="NF003346">
    <property type="entry name" value="PRK04366.1"/>
    <property type="match status" value="1"/>
</dbReference>
<dbReference type="PANTHER" id="PTHR11773:SF1">
    <property type="entry name" value="GLYCINE DEHYDROGENASE (DECARBOXYLATING), MITOCHONDRIAL"/>
    <property type="match status" value="1"/>
</dbReference>
<dbReference type="PANTHER" id="PTHR11773">
    <property type="entry name" value="GLYCINE DEHYDROGENASE, DECARBOXYLATING"/>
    <property type="match status" value="1"/>
</dbReference>
<dbReference type="Pfam" id="PF21478">
    <property type="entry name" value="GcvP2_C"/>
    <property type="match status" value="1"/>
</dbReference>
<dbReference type="Pfam" id="PF02347">
    <property type="entry name" value="GDC-P"/>
    <property type="match status" value="1"/>
</dbReference>
<dbReference type="SUPFAM" id="SSF53383">
    <property type="entry name" value="PLP-dependent transferases"/>
    <property type="match status" value="1"/>
</dbReference>
<accession>B2SFM4</accession>
<reference key="1">
    <citation type="journal article" date="2009" name="PLoS Pathog.">
        <title>Molecular evolutionary consequences of niche restriction in Francisella tularensis, a facultative intracellular pathogen.</title>
        <authorList>
            <person name="Larsson P."/>
            <person name="Elfsmark D."/>
            <person name="Svensson K."/>
            <person name="Wikstroem P."/>
            <person name="Forsman M."/>
            <person name="Brettin T."/>
            <person name="Keim P."/>
            <person name="Johansson A."/>
        </authorList>
    </citation>
    <scope>NUCLEOTIDE SEQUENCE [LARGE SCALE GENOMIC DNA]</scope>
    <source>
        <strain>FSC147</strain>
    </source>
</reference>
<comment type="function">
    <text evidence="1">The glycine cleavage system catalyzes the degradation of glycine. The P protein binds the alpha-amino group of glycine through its pyridoxal phosphate cofactor; CO(2) is released and the remaining methylamine moiety is then transferred to the lipoamide cofactor of the H protein.</text>
</comment>
<comment type="catalytic activity">
    <reaction evidence="1">
        <text>N(6)-[(R)-lipoyl]-L-lysyl-[glycine-cleavage complex H protein] + glycine + H(+) = N(6)-[(R)-S(8)-aminomethyldihydrolipoyl]-L-lysyl-[glycine-cleavage complex H protein] + CO2</text>
        <dbReference type="Rhea" id="RHEA:24304"/>
        <dbReference type="Rhea" id="RHEA-COMP:10494"/>
        <dbReference type="Rhea" id="RHEA-COMP:10495"/>
        <dbReference type="ChEBI" id="CHEBI:15378"/>
        <dbReference type="ChEBI" id="CHEBI:16526"/>
        <dbReference type="ChEBI" id="CHEBI:57305"/>
        <dbReference type="ChEBI" id="CHEBI:83099"/>
        <dbReference type="ChEBI" id="CHEBI:83143"/>
        <dbReference type="EC" id="1.4.4.2"/>
    </reaction>
</comment>
<comment type="cofactor">
    <cofactor evidence="1">
        <name>pyridoxal 5'-phosphate</name>
        <dbReference type="ChEBI" id="CHEBI:597326"/>
    </cofactor>
</comment>
<comment type="subunit">
    <text evidence="1">The glycine cleavage system is composed of four proteins: P, T, L and H. In this organism, the P 'protein' is a heterodimer of two subunits.</text>
</comment>
<comment type="similarity">
    <text evidence="1">Belongs to the GcvP family. C-terminal subunit subfamily.</text>
</comment>
<evidence type="ECO:0000255" key="1">
    <source>
        <dbReference type="HAMAP-Rule" id="MF_00713"/>
    </source>
</evidence>
<evidence type="ECO:0000256" key="2">
    <source>
        <dbReference type="SAM" id="MobiDB-lite"/>
    </source>
</evidence>
<name>GCSPB_FRATM</name>
<keyword id="KW-0560">Oxidoreductase</keyword>
<keyword id="KW-0663">Pyridoxal phosphate</keyword>
<protein>
    <recommendedName>
        <fullName evidence="1">Probable glycine dehydrogenase (decarboxylating) subunit 2</fullName>
        <ecNumber evidence="1">1.4.4.2</ecNumber>
    </recommendedName>
    <alternativeName>
        <fullName evidence="1">Glycine cleavage system P-protein subunit 2</fullName>
    </alternativeName>
    <alternativeName>
        <fullName evidence="1">Glycine decarboxylase subunit 2</fullName>
    </alternativeName>
    <alternativeName>
        <fullName evidence="1">Glycine dehydrogenase (aminomethyl-transferring) subunit 2</fullName>
    </alternativeName>
</protein>